<comment type="function">
    <text evidence="1">Catalyzes the excretion of spermidine.</text>
</comment>
<comment type="subunit">
    <text evidence="1">Forms a complex with MdtI.</text>
</comment>
<comment type="subcellular location">
    <subcellularLocation>
        <location evidence="1">Cell inner membrane</location>
        <topology evidence="1">Multi-pass membrane protein</topology>
    </subcellularLocation>
</comment>
<comment type="similarity">
    <text evidence="1">Belongs to the drug/metabolite transporter (DMT) superfamily. Small multidrug resistance (SMR) (TC 2.A.7.1) family. MdtJ subfamily.</text>
</comment>
<comment type="sequence caution" evidence="3">
    <conflict type="erroneous initiation">
        <sequence resource="EMBL-CDS" id="CAH21289"/>
    </conflict>
</comment>
<keyword id="KW-0997">Cell inner membrane</keyword>
<keyword id="KW-1003">Cell membrane</keyword>
<keyword id="KW-0472">Membrane</keyword>
<keyword id="KW-0812">Transmembrane</keyword>
<keyword id="KW-1133">Transmembrane helix</keyword>
<keyword id="KW-0813">Transport</keyword>
<evidence type="ECO:0000255" key="1">
    <source>
        <dbReference type="HAMAP-Rule" id="MF_01598"/>
    </source>
</evidence>
<evidence type="ECO:0000256" key="2">
    <source>
        <dbReference type="SAM" id="MobiDB-lite"/>
    </source>
</evidence>
<evidence type="ECO:0000305" key="3"/>
<reference key="1">
    <citation type="journal article" date="2004" name="Proc. Natl. Acad. Sci. U.S.A.">
        <title>Insights into the evolution of Yersinia pestis through whole-genome comparison with Yersinia pseudotuberculosis.</title>
        <authorList>
            <person name="Chain P.S.G."/>
            <person name="Carniel E."/>
            <person name="Larimer F.W."/>
            <person name="Lamerdin J."/>
            <person name="Stoutland P.O."/>
            <person name="Regala W.M."/>
            <person name="Georgescu A.M."/>
            <person name="Vergez L.M."/>
            <person name="Land M.L."/>
            <person name="Motin V.L."/>
            <person name="Brubaker R.R."/>
            <person name="Fowler J."/>
            <person name="Hinnebusch J."/>
            <person name="Marceau M."/>
            <person name="Medigue C."/>
            <person name="Simonet M."/>
            <person name="Chenal-Francisque V."/>
            <person name="Souza B."/>
            <person name="Dacheux D."/>
            <person name="Elliott J.M."/>
            <person name="Derbise A."/>
            <person name="Hauser L.J."/>
            <person name="Garcia E."/>
        </authorList>
    </citation>
    <scope>NUCLEOTIDE SEQUENCE [LARGE SCALE GENOMIC DNA]</scope>
    <source>
        <strain>IP32953</strain>
    </source>
</reference>
<name>MDTJ_YERPS</name>
<feature type="chain" id="PRO_0000331190" description="Spermidine export protein MdtJ">
    <location>
        <begin position="1"/>
        <end position="147"/>
    </location>
</feature>
<feature type="transmembrane region" description="Helical" evidence="1">
    <location>
        <begin position="1"/>
        <end position="21"/>
    </location>
</feature>
<feature type="transmembrane region" description="Helical" evidence="1">
    <location>
        <begin position="31"/>
        <end position="51"/>
    </location>
</feature>
<feature type="transmembrane region" description="Helical" evidence="1">
    <location>
        <begin position="54"/>
        <end position="74"/>
    </location>
</feature>
<feature type="transmembrane region" description="Helical" evidence="1">
    <location>
        <begin position="81"/>
        <end position="101"/>
    </location>
</feature>
<feature type="region of interest" description="Disordered" evidence="2">
    <location>
        <begin position="105"/>
        <end position="147"/>
    </location>
</feature>
<feature type="compositionally biased region" description="Basic residues" evidence="2">
    <location>
        <begin position="105"/>
        <end position="117"/>
    </location>
</feature>
<sequence>MIYWIFLGLAIIAEIIGTLSMKYASVSGEMTGHVVMYFMITGSYVMLSLAVKKVALGVAYALWEGIGILIITIFSVMWFGETLSPLKIAGLVTLIGGILLVKSGTRKPKQPNRHRGNRPPSVQGLKTQTTGHHKGVAVESGEHHAAA</sequence>
<protein>
    <recommendedName>
        <fullName evidence="1">Spermidine export protein MdtJ</fullName>
    </recommendedName>
</protein>
<dbReference type="EMBL" id="BX936398">
    <property type="protein sequence ID" value="CAH21289.1"/>
    <property type="status" value="ALT_INIT"/>
    <property type="molecule type" value="Genomic_DNA"/>
</dbReference>
<dbReference type="RefSeq" id="WP_012413719.1">
    <property type="nucleotide sequence ID" value="NC_006155.1"/>
</dbReference>
<dbReference type="SMR" id="Q66AS9"/>
<dbReference type="GeneID" id="49785958"/>
<dbReference type="KEGG" id="ypo:BZ17_413"/>
<dbReference type="KEGG" id="yps:YPTB2051"/>
<dbReference type="PATRIC" id="fig|273123.14.peg.441"/>
<dbReference type="Proteomes" id="UP000001011">
    <property type="component" value="Chromosome"/>
</dbReference>
<dbReference type="GO" id="GO:0005886">
    <property type="term" value="C:plasma membrane"/>
    <property type="evidence" value="ECO:0007669"/>
    <property type="project" value="UniProtKB-SubCell"/>
</dbReference>
<dbReference type="GO" id="GO:0015199">
    <property type="term" value="F:amino-acid betaine transmembrane transporter activity"/>
    <property type="evidence" value="ECO:0007669"/>
    <property type="project" value="TreeGrafter"/>
</dbReference>
<dbReference type="GO" id="GO:0015297">
    <property type="term" value="F:antiporter activity"/>
    <property type="evidence" value="ECO:0007669"/>
    <property type="project" value="TreeGrafter"/>
</dbReference>
<dbReference type="GO" id="GO:0015220">
    <property type="term" value="F:choline transmembrane transporter activity"/>
    <property type="evidence" value="ECO:0007669"/>
    <property type="project" value="TreeGrafter"/>
</dbReference>
<dbReference type="GO" id="GO:0015606">
    <property type="term" value="F:spermidine transmembrane transporter activity"/>
    <property type="evidence" value="ECO:0007669"/>
    <property type="project" value="UniProtKB-UniRule"/>
</dbReference>
<dbReference type="GO" id="GO:0031460">
    <property type="term" value="P:glycine betaine transport"/>
    <property type="evidence" value="ECO:0007669"/>
    <property type="project" value="TreeGrafter"/>
</dbReference>
<dbReference type="FunFam" id="1.10.3730.20:FF:000001">
    <property type="entry name" value="Quaternary ammonium compound resistance transporter SugE"/>
    <property type="match status" value="1"/>
</dbReference>
<dbReference type="Gene3D" id="1.10.3730.20">
    <property type="match status" value="1"/>
</dbReference>
<dbReference type="HAMAP" id="MF_01598">
    <property type="entry name" value="MdtJ"/>
    <property type="match status" value="1"/>
</dbReference>
<dbReference type="InterPro" id="IPR000390">
    <property type="entry name" value="Small_drug/metabolite_transptr"/>
</dbReference>
<dbReference type="InterPro" id="IPR045324">
    <property type="entry name" value="Small_multidrug_res"/>
</dbReference>
<dbReference type="InterPro" id="IPR023740">
    <property type="entry name" value="Spermidine_export_MdtJ"/>
</dbReference>
<dbReference type="NCBIfam" id="NF007767">
    <property type="entry name" value="PRK10452.1"/>
    <property type="match status" value="1"/>
</dbReference>
<dbReference type="PANTHER" id="PTHR30561">
    <property type="entry name" value="SMR FAMILY PROTON-DEPENDENT DRUG EFFLUX TRANSPORTER SUGE"/>
    <property type="match status" value="1"/>
</dbReference>
<dbReference type="PANTHER" id="PTHR30561:SF2">
    <property type="entry name" value="SPERMIDINE EXPORT PROTEIN MDTJ"/>
    <property type="match status" value="1"/>
</dbReference>
<dbReference type="Pfam" id="PF00893">
    <property type="entry name" value="Multi_Drug_Res"/>
    <property type="match status" value="1"/>
</dbReference>
<dbReference type="SUPFAM" id="SSF103481">
    <property type="entry name" value="Multidrug resistance efflux transporter EmrE"/>
    <property type="match status" value="1"/>
</dbReference>
<gene>
    <name evidence="1" type="primary">mdtJ</name>
    <name type="ordered locus">YPTB2051</name>
</gene>
<accession>Q66AS9</accession>
<organism>
    <name type="scientific">Yersinia pseudotuberculosis serotype I (strain IP32953)</name>
    <dbReference type="NCBI Taxonomy" id="273123"/>
    <lineage>
        <taxon>Bacteria</taxon>
        <taxon>Pseudomonadati</taxon>
        <taxon>Pseudomonadota</taxon>
        <taxon>Gammaproteobacteria</taxon>
        <taxon>Enterobacterales</taxon>
        <taxon>Yersiniaceae</taxon>
        <taxon>Yersinia</taxon>
    </lineage>
</organism>
<proteinExistence type="inferred from homology"/>